<keyword id="KW-1185">Reference proteome</keyword>
<keyword id="KW-0687">Ribonucleoprotein</keyword>
<keyword id="KW-0689">Ribosomal protein</keyword>
<keyword id="KW-0694">RNA-binding</keyword>
<keyword id="KW-0699">rRNA-binding</keyword>
<feature type="chain" id="PRO_1000086556" description="Large ribosomal subunit protein uL22">
    <location>
        <begin position="1"/>
        <end position="111"/>
    </location>
</feature>
<name>RL22_GEOUR</name>
<proteinExistence type="inferred from homology"/>
<accession>A5GAX0</accession>
<reference key="1">
    <citation type="submission" date="2007-05" db="EMBL/GenBank/DDBJ databases">
        <title>Complete sequence of Geobacter uraniireducens Rf4.</title>
        <authorList>
            <consortium name="US DOE Joint Genome Institute"/>
            <person name="Copeland A."/>
            <person name="Lucas S."/>
            <person name="Lapidus A."/>
            <person name="Barry K."/>
            <person name="Detter J.C."/>
            <person name="Glavina del Rio T."/>
            <person name="Hammon N."/>
            <person name="Israni S."/>
            <person name="Dalin E."/>
            <person name="Tice H."/>
            <person name="Pitluck S."/>
            <person name="Chertkov O."/>
            <person name="Brettin T."/>
            <person name="Bruce D."/>
            <person name="Han C."/>
            <person name="Schmutz J."/>
            <person name="Larimer F."/>
            <person name="Land M."/>
            <person name="Hauser L."/>
            <person name="Kyrpides N."/>
            <person name="Mikhailova N."/>
            <person name="Shelobolina E."/>
            <person name="Aklujkar M."/>
            <person name="Lovley D."/>
            <person name="Richardson P."/>
        </authorList>
    </citation>
    <scope>NUCLEOTIDE SEQUENCE [LARGE SCALE GENOMIC DNA]</scope>
    <source>
        <strain>ATCC BAA-1134 / JCM 13001 / Rf4</strain>
    </source>
</reference>
<organism>
    <name type="scientific">Geotalea uraniireducens (strain Rf4)</name>
    <name type="common">Geobacter uraniireducens</name>
    <dbReference type="NCBI Taxonomy" id="351605"/>
    <lineage>
        <taxon>Bacteria</taxon>
        <taxon>Pseudomonadati</taxon>
        <taxon>Thermodesulfobacteriota</taxon>
        <taxon>Desulfuromonadia</taxon>
        <taxon>Geobacterales</taxon>
        <taxon>Geobacteraceae</taxon>
        <taxon>Geotalea</taxon>
    </lineage>
</organism>
<protein>
    <recommendedName>
        <fullName evidence="1">Large ribosomal subunit protein uL22</fullName>
    </recommendedName>
    <alternativeName>
        <fullName evidence="2">50S ribosomal protein L22</fullName>
    </alternativeName>
</protein>
<evidence type="ECO:0000255" key="1">
    <source>
        <dbReference type="HAMAP-Rule" id="MF_01331"/>
    </source>
</evidence>
<evidence type="ECO:0000305" key="2"/>
<dbReference type="EMBL" id="CP000698">
    <property type="protein sequence ID" value="ABQ25278.1"/>
    <property type="molecule type" value="Genomic_DNA"/>
</dbReference>
<dbReference type="RefSeq" id="WP_011938001.1">
    <property type="nucleotide sequence ID" value="NC_009483.1"/>
</dbReference>
<dbReference type="SMR" id="A5GAX0"/>
<dbReference type="STRING" id="351605.Gura_1072"/>
<dbReference type="KEGG" id="gur:Gura_1072"/>
<dbReference type="HOGENOM" id="CLU_083987_3_3_7"/>
<dbReference type="OrthoDB" id="9805969at2"/>
<dbReference type="Proteomes" id="UP000006695">
    <property type="component" value="Chromosome"/>
</dbReference>
<dbReference type="GO" id="GO:0022625">
    <property type="term" value="C:cytosolic large ribosomal subunit"/>
    <property type="evidence" value="ECO:0007669"/>
    <property type="project" value="TreeGrafter"/>
</dbReference>
<dbReference type="GO" id="GO:0019843">
    <property type="term" value="F:rRNA binding"/>
    <property type="evidence" value="ECO:0007669"/>
    <property type="project" value="UniProtKB-UniRule"/>
</dbReference>
<dbReference type="GO" id="GO:0003735">
    <property type="term" value="F:structural constituent of ribosome"/>
    <property type="evidence" value="ECO:0007669"/>
    <property type="project" value="InterPro"/>
</dbReference>
<dbReference type="GO" id="GO:0006412">
    <property type="term" value="P:translation"/>
    <property type="evidence" value="ECO:0007669"/>
    <property type="project" value="UniProtKB-UniRule"/>
</dbReference>
<dbReference type="CDD" id="cd00336">
    <property type="entry name" value="Ribosomal_L22"/>
    <property type="match status" value="1"/>
</dbReference>
<dbReference type="Gene3D" id="3.90.470.10">
    <property type="entry name" value="Ribosomal protein L22/L17"/>
    <property type="match status" value="1"/>
</dbReference>
<dbReference type="HAMAP" id="MF_01331_B">
    <property type="entry name" value="Ribosomal_uL22_B"/>
    <property type="match status" value="1"/>
</dbReference>
<dbReference type="InterPro" id="IPR001063">
    <property type="entry name" value="Ribosomal_uL22"/>
</dbReference>
<dbReference type="InterPro" id="IPR005727">
    <property type="entry name" value="Ribosomal_uL22_bac/chlpt-type"/>
</dbReference>
<dbReference type="InterPro" id="IPR047867">
    <property type="entry name" value="Ribosomal_uL22_bac/org-type"/>
</dbReference>
<dbReference type="InterPro" id="IPR018260">
    <property type="entry name" value="Ribosomal_uL22_CS"/>
</dbReference>
<dbReference type="InterPro" id="IPR036394">
    <property type="entry name" value="Ribosomal_uL22_sf"/>
</dbReference>
<dbReference type="NCBIfam" id="TIGR01044">
    <property type="entry name" value="rplV_bact"/>
    <property type="match status" value="1"/>
</dbReference>
<dbReference type="PANTHER" id="PTHR13501">
    <property type="entry name" value="CHLOROPLAST 50S RIBOSOMAL PROTEIN L22-RELATED"/>
    <property type="match status" value="1"/>
</dbReference>
<dbReference type="PANTHER" id="PTHR13501:SF8">
    <property type="entry name" value="LARGE RIBOSOMAL SUBUNIT PROTEIN UL22M"/>
    <property type="match status" value="1"/>
</dbReference>
<dbReference type="Pfam" id="PF00237">
    <property type="entry name" value="Ribosomal_L22"/>
    <property type="match status" value="1"/>
</dbReference>
<dbReference type="SUPFAM" id="SSF54843">
    <property type="entry name" value="Ribosomal protein L22"/>
    <property type="match status" value="1"/>
</dbReference>
<dbReference type="PROSITE" id="PS00464">
    <property type="entry name" value="RIBOSOMAL_L22"/>
    <property type="match status" value="1"/>
</dbReference>
<gene>
    <name evidence="1" type="primary">rplV</name>
    <name type="ordered locus">Gura_1072</name>
</gene>
<sequence>MESSAKLSFARLSPRKTRLVVDMVRGKGIQNALNTLRFSPQPSAKLVSKLLSSAVANAEQKGVADVDRLYVKTIYVNGGTVLKRFVPRAMGRASKIRKPTSHICVVLAEKK</sequence>
<comment type="function">
    <text evidence="1">This protein binds specifically to 23S rRNA; its binding is stimulated by other ribosomal proteins, e.g. L4, L17, and L20. It is important during the early stages of 50S assembly. It makes multiple contacts with different domains of the 23S rRNA in the assembled 50S subunit and ribosome (By similarity).</text>
</comment>
<comment type="function">
    <text evidence="1">The globular domain of the protein is located near the polypeptide exit tunnel on the outside of the subunit, while an extended beta-hairpin is found that lines the wall of the exit tunnel in the center of the 70S ribosome.</text>
</comment>
<comment type="subunit">
    <text evidence="1">Part of the 50S ribosomal subunit.</text>
</comment>
<comment type="similarity">
    <text evidence="1">Belongs to the universal ribosomal protein uL22 family.</text>
</comment>